<name>VSXL2_MOUSE</name>
<feature type="signal peptide" evidence="2">
    <location>
        <begin position="1"/>
        <end position="28"/>
    </location>
</feature>
<feature type="chain" id="PRO_5008865835" description="V-set and immunoglobulin domain-containing protein 10-like 2" evidence="2">
    <location>
        <begin position="29"/>
        <end position="776"/>
    </location>
</feature>
<feature type="transmembrane region" description="Helical" evidence="2">
    <location>
        <begin position="713"/>
        <end position="733"/>
    </location>
</feature>
<feature type="domain" description="Ig-like 1" evidence="3">
    <location>
        <begin position="32"/>
        <end position="140"/>
    </location>
</feature>
<feature type="domain" description="Ig-like 2" evidence="3">
    <location>
        <begin position="150"/>
        <end position="234"/>
    </location>
</feature>
<feature type="domain" description="Ig-like 3" evidence="3">
    <location>
        <begin position="242"/>
        <end position="324"/>
    </location>
</feature>
<feature type="domain" description="Ig-like 4" evidence="3">
    <location>
        <begin position="399"/>
        <end position="498"/>
    </location>
</feature>
<feature type="domain" description="Ig-like 5" evidence="3">
    <location>
        <begin position="500"/>
        <end position="592"/>
    </location>
</feature>
<feature type="domain" description="Fibronectin type-III" evidence="4">
    <location>
        <begin position="608"/>
        <end position="708"/>
    </location>
</feature>
<feature type="glycosylation site" description="N-linked (GlcNAc...) asparagine" evidence="2">
    <location>
        <position position="611"/>
    </location>
</feature>
<feature type="glycosylation site" description="N-linked (GlcNAc...) asparagine" evidence="2">
    <location>
        <position position="637"/>
    </location>
</feature>
<feature type="disulfide bond" evidence="3">
    <location>
        <begin position="56"/>
        <end position="122"/>
    </location>
</feature>
<feature type="disulfide bond" evidence="3">
    <location>
        <begin position="169"/>
        <end position="217"/>
    </location>
</feature>
<feature type="disulfide bond" evidence="3">
    <location>
        <begin position="268"/>
        <end position="308"/>
    </location>
</feature>
<feature type="disulfide bond" evidence="3">
    <location>
        <begin position="435"/>
        <end position="480"/>
    </location>
</feature>
<feature type="disulfide bond" evidence="3">
    <location>
        <begin position="521"/>
        <end position="576"/>
    </location>
</feature>
<keyword id="KW-1015">Disulfide bond</keyword>
<keyword id="KW-0325">Glycoprotein</keyword>
<keyword id="KW-0393">Immunoglobulin domain</keyword>
<keyword id="KW-0472">Membrane</keyword>
<keyword id="KW-1185">Reference proteome</keyword>
<keyword id="KW-0677">Repeat</keyword>
<keyword id="KW-0732">Signal</keyword>
<keyword id="KW-0812">Transmembrane</keyword>
<keyword id="KW-1133">Transmembrane helix</keyword>
<protein>
    <recommendedName>
        <fullName evidence="1">V-set and immunoglobulin domain-containing protein 10-like 2</fullName>
    </recommendedName>
</protein>
<reference key="1">
    <citation type="journal article" date="2009" name="PLoS Biol.">
        <title>Lineage-specific biology revealed by a finished genome assembly of the mouse.</title>
        <authorList>
            <person name="Church D.M."/>
            <person name="Goodstadt L."/>
            <person name="Hillier L.W."/>
            <person name="Zody M.C."/>
            <person name="Goldstein S."/>
            <person name="She X."/>
            <person name="Bult C.J."/>
            <person name="Agarwala R."/>
            <person name="Cherry J.L."/>
            <person name="DiCuccio M."/>
            <person name="Hlavina W."/>
            <person name="Kapustin Y."/>
            <person name="Meric P."/>
            <person name="Maglott D."/>
            <person name="Birtle Z."/>
            <person name="Marques A.C."/>
            <person name="Graves T."/>
            <person name="Zhou S."/>
            <person name="Teague B."/>
            <person name="Potamousis K."/>
            <person name="Churas C."/>
            <person name="Place M."/>
            <person name="Herschleb J."/>
            <person name="Runnheim R."/>
            <person name="Forrest D."/>
            <person name="Amos-Landgraf J."/>
            <person name="Schwartz D.C."/>
            <person name="Cheng Z."/>
            <person name="Lindblad-Toh K."/>
            <person name="Eichler E.E."/>
            <person name="Ponting C.P."/>
        </authorList>
    </citation>
    <scope>NUCLEOTIDE SEQUENCE [LARGE SCALE GENOMIC DNA]</scope>
    <source>
        <strain>C57BL/6J</strain>
    </source>
</reference>
<evidence type="ECO:0000250" key="1">
    <source>
        <dbReference type="UniProtKB" id="P0DP72"/>
    </source>
</evidence>
<evidence type="ECO:0000255" key="2"/>
<evidence type="ECO:0000255" key="3">
    <source>
        <dbReference type="PROSITE-ProRule" id="PRU00114"/>
    </source>
</evidence>
<evidence type="ECO:0000255" key="4">
    <source>
        <dbReference type="PROSITE-ProRule" id="PRU00316"/>
    </source>
</evidence>
<evidence type="ECO:0000312" key="5">
    <source>
        <dbReference type="MGI" id="MGI:2685959"/>
    </source>
</evidence>
<accession>A0A140LHF2</accession>
<dbReference type="EMBL" id="AC118232">
    <property type="status" value="NOT_ANNOTATED_CDS"/>
    <property type="molecule type" value="Genomic_DNA"/>
</dbReference>
<dbReference type="FunCoup" id="A0A140LHF2">
    <property type="interactions" value="7"/>
</dbReference>
<dbReference type="GlyCosmos" id="A0A140LHF2">
    <property type="glycosylation" value="2 sites, No reported glycans"/>
</dbReference>
<dbReference type="GlyGen" id="A0A140LHF2">
    <property type="glycosylation" value="4 sites"/>
</dbReference>
<dbReference type="Ensembl" id="ENSMUST00000183573.5">
    <property type="protein sequence ID" value="ENSMUSP00000146390.3"/>
    <property type="gene ID" value="ENSMUSG00000098590.5"/>
</dbReference>
<dbReference type="AGR" id="MGI:2685959"/>
<dbReference type="MGI" id="MGI:2685959">
    <property type="gene designation" value="Vsig10l2"/>
</dbReference>
<dbReference type="VEuPathDB" id="HostDB:ENSMUSG00000098590"/>
<dbReference type="GeneTree" id="ENSGT00940000163088"/>
<dbReference type="InParanoid" id="A0A140LHF2"/>
<dbReference type="OMA" id="DPVNRTH"/>
<dbReference type="OrthoDB" id="9442762at2759"/>
<dbReference type="PRO" id="PR:A0A140LHF2"/>
<dbReference type="Proteomes" id="UP000000589">
    <property type="component" value="Chromosome 9"/>
</dbReference>
<dbReference type="RNAct" id="A0A140LHF2">
    <property type="molecule type" value="protein"/>
</dbReference>
<dbReference type="Bgee" id="ENSMUSG00000098590">
    <property type="expression patterns" value="Expressed in white adipose tissue"/>
</dbReference>
<dbReference type="GO" id="GO:0016020">
    <property type="term" value="C:membrane"/>
    <property type="evidence" value="ECO:0007669"/>
    <property type="project" value="UniProtKB-SubCell"/>
</dbReference>
<dbReference type="CDD" id="cd00063">
    <property type="entry name" value="FN3"/>
    <property type="match status" value="1"/>
</dbReference>
<dbReference type="CDD" id="cd00096">
    <property type="entry name" value="Ig"/>
    <property type="match status" value="1"/>
</dbReference>
<dbReference type="Gene3D" id="2.60.40.10">
    <property type="entry name" value="Immunoglobulins"/>
    <property type="match status" value="5"/>
</dbReference>
<dbReference type="InterPro" id="IPR003961">
    <property type="entry name" value="FN3_dom"/>
</dbReference>
<dbReference type="InterPro" id="IPR036116">
    <property type="entry name" value="FN3_sf"/>
</dbReference>
<dbReference type="InterPro" id="IPR007110">
    <property type="entry name" value="Ig-like_dom"/>
</dbReference>
<dbReference type="InterPro" id="IPR036179">
    <property type="entry name" value="Ig-like_dom_sf"/>
</dbReference>
<dbReference type="InterPro" id="IPR013783">
    <property type="entry name" value="Ig-like_fold"/>
</dbReference>
<dbReference type="InterPro" id="IPR003599">
    <property type="entry name" value="Ig_sub"/>
</dbReference>
<dbReference type="InterPro" id="IPR003598">
    <property type="entry name" value="Ig_sub2"/>
</dbReference>
<dbReference type="InterPro" id="IPR052598">
    <property type="entry name" value="IgSF_CEA-related"/>
</dbReference>
<dbReference type="PANTHER" id="PTHR44337">
    <property type="entry name" value="CARCINOEMBRYONIC ANTIGEN-RELATED CELL ADHESION MOLECULE 8"/>
    <property type="match status" value="1"/>
</dbReference>
<dbReference type="PANTHER" id="PTHR44337:SF8">
    <property type="entry name" value="IMMUNOGLOBULIN SUBTYPE DOMAIN-CONTAINING PROTEIN"/>
    <property type="match status" value="1"/>
</dbReference>
<dbReference type="Pfam" id="PF13927">
    <property type="entry name" value="Ig_3"/>
    <property type="match status" value="3"/>
</dbReference>
<dbReference type="SMART" id="SM00409">
    <property type="entry name" value="IG"/>
    <property type="match status" value="4"/>
</dbReference>
<dbReference type="SMART" id="SM00408">
    <property type="entry name" value="IGc2"/>
    <property type="match status" value="4"/>
</dbReference>
<dbReference type="SUPFAM" id="SSF49265">
    <property type="entry name" value="Fibronectin type III"/>
    <property type="match status" value="1"/>
</dbReference>
<dbReference type="SUPFAM" id="SSF48726">
    <property type="entry name" value="Immunoglobulin"/>
    <property type="match status" value="4"/>
</dbReference>
<dbReference type="PROSITE" id="PS50853">
    <property type="entry name" value="FN3"/>
    <property type="match status" value="1"/>
</dbReference>
<dbReference type="PROSITE" id="PS50835">
    <property type="entry name" value="IG_LIKE"/>
    <property type="match status" value="4"/>
</dbReference>
<organism>
    <name type="scientific">Mus musculus</name>
    <name type="common">Mouse</name>
    <dbReference type="NCBI Taxonomy" id="10090"/>
    <lineage>
        <taxon>Eukaryota</taxon>
        <taxon>Metazoa</taxon>
        <taxon>Chordata</taxon>
        <taxon>Craniata</taxon>
        <taxon>Vertebrata</taxon>
        <taxon>Euteleostomi</taxon>
        <taxon>Mammalia</taxon>
        <taxon>Eutheria</taxon>
        <taxon>Euarchontoglires</taxon>
        <taxon>Glires</taxon>
        <taxon>Rodentia</taxon>
        <taxon>Myomorpha</taxon>
        <taxon>Muroidea</taxon>
        <taxon>Muridae</taxon>
        <taxon>Murinae</taxon>
        <taxon>Mus</taxon>
        <taxon>Mus</taxon>
    </lineage>
</organism>
<sequence>MVGLSAHHRPLGCRLLILFCLLHPGASGQPYPTSNTAGEEALSVQGVRGSSVELECRTGPAPMAVLWSFTPLGSLVLQPVAVTSGASSKVESGALALGVVSLRNSSLVIEELREGARGHFLCQTLLVSGGQVHTAYLYLMLTVLVPVSKPRVQLNDPSPVEGVSVVATCAVREGTEPLTFSWHHHMPQGPGEVLVGLSEPRLQLDPVNRTHLGWYTCSVSNVVNQLKSDGAFLDVIYGPDKPVITVEPLGFSEDGFWASEREEVTLSCLAASNPPSHYVWFRDDSQIHTGPTYIIASASRTHTGLYTCLAHNRHLDTHTQTTVQLIIYYPPEGQPSCAVLPTLGVVTLLCTWPGGFPNAQLHWEGPQGIGPSASGNVTWSYTTTGLPNGSIFSCTGQHPTLAMPIFCRVTLWEPPGSPTCWTTATVGDQYIMLSCEWPGGEPPAMLSWLDRQQSLGDLGSSQAVHLLQAQSDLAGREFTCQGSHPLTAPGSHCRLRLEVPQLTVAEPRVSVLEGEEAWLGCALQRGTPPAQLLWLGPQQQQLEGSTPGFILHPEGTHLRLQVRDADPAHHRGTYQCVARNALGNSSQSVLLEVLSECKGFVCPCGYPTPPNVTISRLTYRRQRREVQLQWAIYGPGNLTGFLVQQRASVPSSEAGAWEVAASDIEPESRDRRLGGLDPGVLYAFRILAMNHHTAGYPSEVKTPVDPAFSAYPAVLGAAGTGVVVALATSLLVFQYAARHPHTFPCTETASTTSSSDPIQESIDAPVNVTITVTATP</sequence>
<proteinExistence type="inferred from homology"/>
<comment type="subcellular location">
    <subcellularLocation>
        <location evidence="2">Membrane</location>
        <topology evidence="2">Single-pass membrane protein</topology>
    </subcellularLocation>
</comment>
<gene>
    <name evidence="1" type="primary">Vsig10l2</name>
    <name evidence="5" type="synonym">Gm1113</name>
</gene>